<keyword id="KW-0963">Cytoplasm</keyword>
<keyword id="KW-0808">Transferase</keyword>
<keyword id="KW-0819">tRNA processing</keyword>
<gene>
    <name evidence="1" type="primary">tusD</name>
    <name type="ordered locus">SCH_3385</name>
</gene>
<feature type="chain" id="PRO_0000234533" description="Sulfurtransferase TusD">
    <location>
        <begin position="1"/>
        <end position="128"/>
    </location>
</feature>
<feature type="active site" description="Cysteine persulfide intermediate" evidence="1">
    <location>
        <position position="78"/>
    </location>
</feature>
<accession>Q57J21</accession>
<name>TUSD_SALCH</name>
<protein>
    <recommendedName>
        <fullName evidence="1">Sulfurtransferase TusD</fullName>
        <ecNumber evidence="1">2.8.1.-</ecNumber>
    </recommendedName>
    <alternativeName>
        <fullName evidence="1">tRNA 2-thiouridine synthesizing protein D</fullName>
    </alternativeName>
</protein>
<reference key="1">
    <citation type="journal article" date="2005" name="Nucleic Acids Res.">
        <title>The genome sequence of Salmonella enterica serovar Choleraesuis, a highly invasive and resistant zoonotic pathogen.</title>
        <authorList>
            <person name="Chiu C.-H."/>
            <person name="Tang P."/>
            <person name="Chu C."/>
            <person name="Hu S."/>
            <person name="Bao Q."/>
            <person name="Yu J."/>
            <person name="Chou Y.-Y."/>
            <person name="Wang H.-S."/>
            <person name="Lee Y.-S."/>
        </authorList>
    </citation>
    <scope>NUCLEOTIDE SEQUENCE [LARGE SCALE GENOMIC DNA]</scope>
    <source>
        <strain>SC-B67</strain>
    </source>
</reference>
<evidence type="ECO:0000255" key="1">
    <source>
        <dbReference type="HAMAP-Rule" id="MF_00390"/>
    </source>
</evidence>
<sequence>MRYAIMVTGPAYGTQQASSALQFAHALLNEGHELASVFFYREGVYNANLLTSPASDEYDLVRAWQKLNTQHGVALNICVAAALRRGIIDETEAGRLALPSANLQPGFTLSGLGALAEASLTCDRVVQF</sequence>
<proteinExistence type="inferred from homology"/>
<organism>
    <name type="scientific">Salmonella choleraesuis (strain SC-B67)</name>
    <dbReference type="NCBI Taxonomy" id="321314"/>
    <lineage>
        <taxon>Bacteria</taxon>
        <taxon>Pseudomonadati</taxon>
        <taxon>Pseudomonadota</taxon>
        <taxon>Gammaproteobacteria</taxon>
        <taxon>Enterobacterales</taxon>
        <taxon>Enterobacteriaceae</taxon>
        <taxon>Salmonella</taxon>
    </lineage>
</organism>
<comment type="function">
    <text evidence="1">Part of a sulfur-relay system required for 2-thiolation of 5-methylaminomethyl-2-thiouridine (mnm(5)s(2)U) at tRNA wobble positions. Accepts sulfur from TusA and transfers it in turn to TusE.</text>
</comment>
<comment type="subunit">
    <text evidence="1">Heterohexamer, formed by a dimer of trimers. The hexameric TusBCD complex contains 2 copies each of TusB, TusC and TusD. The TusBCD complex interacts with TusE.</text>
</comment>
<comment type="subcellular location">
    <subcellularLocation>
        <location evidence="1">Cytoplasm</location>
    </subcellularLocation>
</comment>
<comment type="similarity">
    <text evidence="1">Belongs to the DsrE/TusD family.</text>
</comment>
<dbReference type="EC" id="2.8.1.-" evidence="1"/>
<dbReference type="EMBL" id="AE017220">
    <property type="protein sequence ID" value="AAX67291.1"/>
    <property type="molecule type" value="Genomic_DNA"/>
</dbReference>
<dbReference type="RefSeq" id="WP_001268010.1">
    <property type="nucleotide sequence ID" value="NC_006905.1"/>
</dbReference>
<dbReference type="SMR" id="Q57J21"/>
<dbReference type="KEGG" id="sec:SCH_3385"/>
<dbReference type="HOGENOM" id="CLU_132095_0_0_6"/>
<dbReference type="Proteomes" id="UP000000538">
    <property type="component" value="Chromosome"/>
</dbReference>
<dbReference type="GO" id="GO:1990228">
    <property type="term" value="C:sulfurtransferase complex"/>
    <property type="evidence" value="ECO:0007669"/>
    <property type="project" value="TreeGrafter"/>
</dbReference>
<dbReference type="GO" id="GO:0097163">
    <property type="term" value="F:sulfur carrier activity"/>
    <property type="evidence" value="ECO:0007669"/>
    <property type="project" value="TreeGrafter"/>
</dbReference>
<dbReference type="GO" id="GO:0016783">
    <property type="term" value="F:sulfurtransferase activity"/>
    <property type="evidence" value="ECO:0007669"/>
    <property type="project" value="UniProtKB-UniRule"/>
</dbReference>
<dbReference type="GO" id="GO:0002143">
    <property type="term" value="P:tRNA wobble position uridine thiolation"/>
    <property type="evidence" value="ECO:0007669"/>
    <property type="project" value="TreeGrafter"/>
</dbReference>
<dbReference type="FunFam" id="3.40.1260.10:FF:000001">
    <property type="entry name" value="Sulfurtransferase TusD"/>
    <property type="match status" value="1"/>
</dbReference>
<dbReference type="Gene3D" id="3.40.1260.10">
    <property type="entry name" value="DsrEFH-like"/>
    <property type="match status" value="1"/>
</dbReference>
<dbReference type="HAMAP" id="MF_00390">
    <property type="entry name" value="Thiourid_synth_D"/>
    <property type="match status" value="1"/>
</dbReference>
<dbReference type="InterPro" id="IPR027396">
    <property type="entry name" value="DsrEFH-like"/>
</dbReference>
<dbReference type="InterPro" id="IPR003787">
    <property type="entry name" value="Sulphur_relay_DsrE/F-like"/>
</dbReference>
<dbReference type="InterPro" id="IPR017463">
    <property type="entry name" value="Sulphur_relay_TusD/DsrE"/>
</dbReference>
<dbReference type="NCBIfam" id="NF001237">
    <property type="entry name" value="PRK00207.1"/>
    <property type="match status" value="1"/>
</dbReference>
<dbReference type="NCBIfam" id="TIGR03012">
    <property type="entry name" value="sulf_tusD_dsrE"/>
    <property type="match status" value="1"/>
</dbReference>
<dbReference type="PANTHER" id="PTHR34874">
    <property type="entry name" value="PROTEIN YCHN"/>
    <property type="match status" value="1"/>
</dbReference>
<dbReference type="PANTHER" id="PTHR34874:SF3">
    <property type="entry name" value="SULFURTRANSFERASE TUSD"/>
    <property type="match status" value="1"/>
</dbReference>
<dbReference type="Pfam" id="PF02635">
    <property type="entry name" value="DsrE"/>
    <property type="match status" value="1"/>
</dbReference>
<dbReference type="SUPFAM" id="SSF75169">
    <property type="entry name" value="DsrEFH-like"/>
    <property type="match status" value="1"/>
</dbReference>